<name>RF1_LACP7</name>
<protein>
    <recommendedName>
        <fullName evidence="1">Peptide chain release factor 1</fullName>
        <shortName evidence="1">RF-1</shortName>
    </recommendedName>
</protein>
<sequence>MFDKLEDLLIRFQEIQNELNEPTVTNDQARFRKLMKEQNDLGEIVDKYLEYKQTKKNIEESLELLDEESDEEMRELAKEELSTSKANLVVIEEQLKILLLPKDPNDSKNVIVEIRGGAGGDEAALFAAELFRMYSKYAETMRWKIDMMNLNENGIGGFKEVIFMINGQGAYSKLKYESGVHRVQRIPVTESGGRIHTSTVTVAIMPEAEEVDVELNMNDCRFDVFRSSGNGGQCVNTTDSAVRLTHMPTGIVISCQDEKSQLKNRDKALKVLRARLYELELEKAHDAEAAARKSQVGTGDRSEKIRTYNFPQGRCTDHRIKLTSHRLDDIMNGDLQEVIDSLTAADQAAKLSNMQDEY</sequence>
<evidence type="ECO:0000255" key="1">
    <source>
        <dbReference type="HAMAP-Rule" id="MF_00093"/>
    </source>
</evidence>
<feature type="chain" id="PRO_1000075490" description="Peptide chain release factor 1">
    <location>
        <begin position="1"/>
        <end position="358"/>
    </location>
</feature>
<feature type="modified residue" description="N5-methylglutamine" evidence="1">
    <location>
        <position position="233"/>
    </location>
</feature>
<reference key="1">
    <citation type="submission" date="2007-11" db="EMBL/GenBank/DDBJ databases">
        <title>Complete genome sequence of Clostridium phytofermentans ISDg.</title>
        <authorList>
            <person name="Leschine S.B."/>
            <person name="Warnick T.A."/>
            <person name="Blanchard J.L."/>
            <person name="Schnell D.J."/>
            <person name="Petit E.L."/>
            <person name="LaTouf W.G."/>
            <person name="Copeland A."/>
            <person name="Lucas S."/>
            <person name="Lapidus A."/>
            <person name="Barry K."/>
            <person name="Glavina del Rio T."/>
            <person name="Dalin E."/>
            <person name="Tice H."/>
            <person name="Pitluck S."/>
            <person name="Kiss H."/>
            <person name="Brettin T."/>
            <person name="Bruce D."/>
            <person name="Detter J.C."/>
            <person name="Han C."/>
            <person name="Kuske C."/>
            <person name="Schmutz J."/>
            <person name="Larimer F."/>
            <person name="Land M."/>
            <person name="Hauser L."/>
            <person name="Kyrpides N."/>
            <person name="Kim E.A."/>
            <person name="Richardson P."/>
        </authorList>
    </citation>
    <scope>NUCLEOTIDE SEQUENCE [LARGE SCALE GENOMIC DNA]</scope>
    <source>
        <strain>ATCC 700394 / DSM 18823 / ISDg</strain>
    </source>
</reference>
<accession>A9KHD4</accession>
<organism>
    <name type="scientific">Lachnoclostridium phytofermentans (strain ATCC 700394 / DSM 18823 / ISDg)</name>
    <name type="common">Clostridium phytofermentans</name>
    <dbReference type="NCBI Taxonomy" id="357809"/>
    <lineage>
        <taxon>Bacteria</taxon>
        <taxon>Bacillati</taxon>
        <taxon>Bacillota</taxon>
        <taxon>Clostridia</taxon>
        <taxon>Lachnospirales</taxon>
        <taxon>Lachnospiraceae</taxon>
    </lineage>
</organism>
<proteinExistence type="inferred from homology"/>
<dbReference type="EMBL" id="CP000885">
    <property type="protein sequence ID" value="ABX40801.1"/>
    <property type="molecule type" value="Genomic_DNA"/>
</dbReference>
<dbReference type="RefSeq" id="WP_012198444.1">
    <property type="nucleotide sequence ID" value="NC_010001.1"/>
</dbReference>
<dbReference type="SMR" id="A9KHD4"/>
<dbReference type="STRING" id="357809.Cphy_0414"/>
<dbReference type="KEGG" id="cpy:Cphy_0414"/>
<dbReference type="eggNOG" id="COG0216">
    <property type="taxonomic scope" value="Bacteria"/>
</dbReference>
<dbReference type="HOGENOM" id="CLU_036856_0_1_9"/>
<dbReference type="OrthoDB" id="9806673at2"/>
<dbReference type="Proteomes" id="UP000000370">
    <property type="component" value="Chromosome"/>
</dbReference>
<dbReference type="GO" id="GO:0005737">
    <property type="term" value="C:cytoplasm"/>
    <property type="evidence" value="ECO:0007669"/>
    <property type="project" value="UniProtKB-SubCell"/>
</dbReference>
<dbReference type="GO" id="GO:0016149">
    <property type="term" value="F:translation release factor activity, codon specific"/>
    <property type="evidence" value="ECO:0007669"/>
    <property type="project" value="UniProtKB-UniRule"/>
</dbReference>
<dbReference type="FunFam" id="3.30.160.20:FF:000004">
    <property type="entry name" value="Peptide chain release factor 1"/>
    <property type="match status" value="1"/>
</dbReference>
<dbReference type="FunFam" id="3.30.70.1660:FF:000002">
    <property type="entry name" value="Peptide chain release factor 1"/>
    <property type="match status" value="1"/>
</dbReference>
<dbReference type="FunFam" id="3.30.70.1660:FF:000004">
    <property type="entry name" value="Peptide chain release factor 1"/>
    <property type="match status" value="1"/>
</dbReference>
<dbReference type="Gene3D" id="3.30.160.20">
    <property type="match status" value="1"/>
</dbReference>
<dbReference type="Gene3D" id="3.30.70.1660">
    <property type="match status" value="2"/>
</dbReference>
<dbReference type="Gene3D" id="6.10.140.1950">
    <property type="match status" value="1"/>
</dbReference>
<dbReference type="HAMAP" id="MF_00093">
    <property type="entry name" value="Rel_fac_1"/>
    <property type="match status" value="1"/>
</dbReference>
<dbReference type="InterPro" id="IPR005139">
    <property type="entry name" value="PCRF"/>
</dbReference>
<dbReference type="InterPro" id="IPR000352">
    <property type="entry name" value="Pep_chain_release_fac_I"/>
</dbReference>
<dbReference type="InterPro" id="IPR045853">
    <property type="entry name" value="Pep_chain_release_fac_I_sf"/>
</dbReference>
<dbReference type="InterPro" id="IPR050057">
    <property type="entry name" value="Prokaryotic/Mito_RF"/>
</dbReference>
<dbReference type="InterPro" id="IPR004373">
    <property type="entry name" value="RF-1"/>
</dbReference>
<dbReference type="NCBIfam" id="TIGR00019">
    <property type="entry name" value="prfA"/>
    <property type="match status" value="1"/>
</dbReference>
<dbReference type="NCBIfam" id="NF001859">
    <property type="entry name" value="PRK00591.1"/>
    <property type="match status" value="1"/>
</dbReference>
<dbReference type="PANTHER" id="PTHR43804">
    <property type="entry name" value="LD18447P"/>
    <property type="match status" value="1"/>
</dbReference>
<dbReference type="PANTHER" id="PTHR43804:SF7">
    <property type="entry name" value="LD18447P"/>
    <property type="match status" value="1"/>
</dbReference>
<dbReference type="Pfam" id="PF03462">
    <property type="entry name" value="PCRF"/>
    <property type="match status" value="1"/>
</dbReference>
<dbReference type="Pfam" id="PF00472">
    <property type="entry name" value="RF-1"/>
    <property type="match status" value="1"/>
</dbReference>
<dbReference type="SMART" id="SM00937">
    <property type="entry name" value="PCRF"/>
    <property type="match status" value="1"/>
</dbReference>
<dbReference type="SUPFAM" id="SSF75620">
    <property type="entry name" value="Release factor"/>
    <property type="match status" value="1"/>
</dbReference>
<dbReference type="PROSITE" id="PS00745">
    <property type="entry name" value="RF_PROK_I"/>
    <property type="match status" value="1"/>
</dbReference>
<gene>
    <name evidence="1" type="primary">prfA</name>
    <name type="ordered locus">Cphy_0414</name>
</gene>
<keyword id="KW-0963">Cytoplasm</keyword>
<keyword id="KW-0488">Methylation</keyword>
<keyword id="KW-0648">Protein biosynthesis</keyword>
<keyword id="KW-1185">Reference proteome</keyword>
<comment type="function">
    <text evidence="1">Peptide chain release factor 1 directs the termination of translation in response to the peptide chain termination codons UAG and UAA.</text>
</comment>
<comment type="subcellular location">
    <subcellularLocation>
        <location evidence="1">Cytoplasm</location>
    </subcellularLocation>
</comment>
<comment type="PTM">
    <text evidence="1">Methylated by PrmC. Methylation increases the termination efficiency of RF1.</text>
</comment>
<comment type="similarity">
    <text evidence="1">Belongs to the prokaryotic/mitochondrial release factor family.</text>
</comment>